<proteinExistence type="inferred from homology"/>
<reference key="1">
    <citation type="journal article" date="2006" name="Proc. Natl. Acad. Sci. U.S.A.">
        <title>Burkholderia xenovorans LB400 harbors a multi-replicon, 9.73-Mbp genome shaped for versatility.</title>
        <authorList>
            <person name="Chain P.S.G."/>
            <person name="Denef V.J."/>
            <person name="Konstantinidis K.T."/>
            <person name="Vergez L.M."/>
            <person name="Agullo L."/>
            <person name="Reyes V.L."/>
            <person name="Hauser L."/>
            <person name="Cordova M."/>
            <person name="Gomez L."/>
            <person name="Gonzalez M."/>
            <person name="Land M."/>
            <person name="Lao V."/>
            <person name="Larimer F."/>
            <person name="LiPuma J.J."/>
            <person name="Mahenthiralingam E."/>
            <person name="Malfatti S.A."/>
            <person name="Marx C.J."/>
            <person name="Parnell J.J."/>
            <person name="Ramette A."/>
            <person name="Richardson P."/>
            <person name="Seeger M."/>
            <person name="Smith D."/>
            <person name="Spilker T."/>
            <person name="Sul W.J."/>
            <person name="Tsoi T.V."/>
            <person name="Ulrich L.E."/>
            <person name="Zhulin I.B."/>
            <person name="Tiedje J.M."/>
        </authorList>
    </citation>
    <scope>NUCLEOTIDE SEQUENCE [LARGE SCALE GENOMIC DNA]</scope>
    <source>
        <strain>LB400</strain>
    </source>
</reference>
<evidence type="ECO:0000255" key="1">
    <source>
        <dbReference type="HAMAP-Rule" id="MF_01347"/>
    </source>
</evidence>
<comment type="function">
    <text evidence="1">Produces ATP from ADP in the presence of a proton gradient across the membrane. The catalytic sites are hosted primarily by the beta subunits.</text>
</comment>
<comment type="catalytic activity">
    <reaction evidence="1">
        <text>ATP + H2O + 4 H(+)(in) = ADP + phosphate + 5 H(+)(out)</text>
        <dbReference type="Rhea" id="RHEA:57720"/>
        <dbReference type="ChEBI" id="CHEBI:15377"/>
        <dbReference type="ChEBI" id="CHEBI:15378"/>
        <dbReference type="ChEBI" id="CHEBI:30616"/>
        <dbReference type="ChEBI" id="CHEBI:43474"/>
        <dbReference type="ChEBI" id="CHEBI:456216"/>
        <dbReference type="EC" id="7.1.2.2"/>
    </reaction>
</comment>
<comment type="subunit">
    <text evidence="1">F-type ATPases have 2 components, CF(1) - the catalytic core - and CF(0) - the membrane proton channel. CF(1) has five subunits: alpha(3), beta(3), gamma(1), delta(1), epsilon(1). CF(0) has three main subunits: a(1), b(2) and c(9-12). The alpha and beta chains form an alternating ring which encloses part of the gamma chain. CF(1) is attached to CF(0) by a central stalk formed by the gamma and epsilon chains, while a peripheral stalk is formed by the delta and b chains.</text>
</comment>
<comment type="subcellular location">
    <subcellularLocation>
        <location evidence="1">Cell inner membrane</location>
        <topology evidence="1">Peripheral membrane protein</topology>
    </subcellularLocation>
</comment>
<comment type="similarity">
    <text evidence="1">Belongs to the ATPase alpha/beta chains family.</text>
</comment>
<keyword id="KW-0066">ATP synthesis</keyword>
<keyword id="KW-0067">ATP-binding</keyword>
<keyword id="KW-0997">Cell inner membrane</keyword>
<keyword id="KW-1003">Cell membrane</keyword>
<keyword id="KW-0139">CF(1)</keyword>
<keyword id="KW-0375">Hydrogen ion transport</keyword>
<keyword id="KW-0406">Ion transport</keyword>
<keyword id="KW-0472">Membrane</keyword>
<keyword id="KW-0547">Nucleotide-binding</keyword>
<keyword id="KW-1185">Reference proteome</keyword>
<keyword id="KW-1278">Translocase</keyword>
<keyword id="KW-0813">Transport</keyword>
<protein>
    <recommendedName>
        <fullName evidence="1">ATP synthase subunit beta 2</fullName>
        <ecNumber evidence="1">7.1.2.2</ecNumber>
    </recommendedName>
    <alternativeName>
        <fullName evidence="1">ATP synthase F1 sector subunit beta 2</fullName>
    </alternativeName>
    <alternativeName>
        <fullName evidence="1">F-ATPase subunit beta 2</fullName>
    </alternativeName>
</protein>
<feature type="chain" id="PRO_0000254236" description="ATP synthase subunit beta 2">
    <location>
        <begin position="1"/>
        <end position="464"/>
    </location>
</feature>
<feature type="binding site" evidence="1">
    <location>
        <begin position="153"/>
        <end position="160"/>
    </location>
    <ligand>
        <name>ATP</name>
        <dbReference type="ChEBI" id="CHEBI:30616"/>
    </ligand>
</feature>
<gene>
    <name evidence="1" type="primary">atpD2</name>
    <name type="ordered locus">Bxeno_A4349</name>
    <name type="ORF">Bxe_A0040</name>
</gene>
<name>ATPB2_PARXL</name>
<organism>
    <name type="scientific">Paraburkholderia xenovorans (strain LB400)</name>
    <dbReference type="NCBI Taxonomy" id="266265"/>
    <lineage>
        <taxon>Bacteria</taxon>
        <taxon>Pseudomonadati</taxon>
        <taxon>Pseudomonadota</taxon>
        <taxon>Betaproteobacteria</taxon>
        <taxon>Burkholderiales</taxon>
        <taxon>Burkholderiaceae</taxon>
        <taxon>Paraburkholderia</taxon>
    </lineage>
</organism>
<dbReference type="EC" id="7.1.2.2" evidence="1"/>
<dbReference type="EMBL" id="CP000270">
    <property type="protein sequence ID" value="ABE32887.1"/>
    <property type="molecule type" value="Genomic_DNA"/>
</dbReference>
<dbReference type="SMR" id="Q13SQ2"/>
<dbReference type="STRING" id="266265.Bxe_A0040"/>
<dbReference type="KEGG" id="bxe:Bxe_A0040"/>
<dbReference type="PATRIC" id="fig|266265.5.peg.4573"/>
<dbReference type="eggNOG" id="COG0055">
    <property type="taxonomic scope" value="Bacteria"/>
</dbReference>
<dbReference type="OrthoDB" id="9801639at2"/>
<dbReference type="Proteomes" id="UP000001817">
    <property type="component" value="Chromosome 1"/>
</dbReference>
<dbReference type="GO" id="GO:0005886">
    <property type="term" value="C:plasma membrane"/>
    <property type="evidence" value="ECO:0007669"/>
    <property type="project" value="UniProtKB-SubCell"/>
</dbReference>
<dbReference type="GO" id="GO:0045259">
    <property type="term" value="C:proton-transporting ATP synthase complex"/>
    <property type="evidence" value="ECO:0007669"/>
    <property type="project" value="UniProtKB-KW"/>
</dbReference>
<dbReference type="GO" id="GO:0005524">
    <property type="term" value="F:ATP binding"/>
    <property type="evidence" value="ECO:0007669"/>
    <property type="project" value="UniProtKB-UniRule"/>
</dbReference>
<dbReference type="GO" id="GO:0016887">
    <property type="term" value="F:ATP hydrolysis activity"/>
    <property type="evidence" value="ECO:0007669"/>
    <property type="project" value="InterPro"/>
</dbReference>
<dbReference type="GO" id="GO:0046933">
    <property type="term" value="F:proton-transporting ATP synthase activity, rotational mechanism"/>
    <property type="evidence" value="ECO:0007669"/>
    <property type="project" value="UniProtKB-UniRule"/>
</dbReference>
<dbReference type="CDD" id="cd18110">
    <property type="entry name" value="ATP-synt_F1_beta_C"/>
    <property type="match status" value="1"/>
</dbReference>
<dbReference type="CDD" id="cd18115">
    <property type="entry name" value="ATP-synt_F1_beta_N"/>
    <property type="match status" value="1"/>
</dbReference>
<dbReference type="CDD" id="cd01133">
    <property type="entry name" value="F1-ATPase_beta_CD"/>
    <property type="match status" value="1"/>
</dbReference>
<dbReference type="FunFam" id="1.10.1140.10:FF:000001">
    <property type="entry name" value="ATP synthase subunit beta"/>
    <property type="match status" value="1"/>
</dbReference>
<dbReference type="FunFam" id="3.40.50.300:FF:000004">
    <property type="entry name" value="ATP synthase subunit beta"/>
    <property type="match status" value="1"/>
</dbReference>
<dbReference type="Gene3D" id="2.40.10.170">
    <property type="match status" value="1"/>
</dbReference>
<dbReference type="Gene3D" id="1.10.1140.10">
    <property type="entry name" value="Bovine Mitochondrial F1-atpase, Atp Synthase Beta Chain, Chain D, domain 3"/>
    <property type="match status" value="1"/>
</dbReference>
<dbReference type="Gene3D" id="3.40.50.300">
    <property type="entry name" value="P-loop containing nucleotide triphosphate hydrolases"/>
    <property type="match status" value="1"/>
</dbReference>
<dbReference type="HAMAP" id="MF_01347">
    <property type="entry name" value="ATP_synth_beta_bact"/>
    <property type="match status" value="1"/>
</dbReference>
<dbReference type="InterPro" id="IPR003593">
    <property type="entry name" value="AAA+_ATPase"/>
</dbReference>
<dbReference type="InterPro" id="IPR055190">
    <property type="entry name" value="ATP-synt_VA_C"/>
</dbReference>
<dbReference type="InterPro" id="IPR005722">
    <property type="entry name" value="ATP_synth_F1_bsu"/>
</dbReference>
<dbReference type="InterPro" id="IPR020003">
    <property type="entry name" value="ATPase_a/bsu_AS"/>
</dbReference>
<dbReference type="InterPro" id="IPR050053">
    <property type="entry name" value="ATPase_alpha/beta_chains"/>
</dbReference>
<dbReference type="InterPro" id="IPR004100">
    <property type="entry name" value="ATPase_F1/V1/A1_a/bsu_N"/>
</dbReference>
<dbReference type="InterPro" id="IPR036121">
    <property type="entry name" value="ATPase_F1/V1/A1_a/bsu_N_sf"/>
</dbReference>
<dbReference type="InterPro" id="IPR000194">
    <property type="entry name" value="ATPase_F1/V1/A1_a/bsu_nucl-bd"/>
</dbReference>
<dbReference type="InterPro" id="IPR024034">
    <property type="entry name" value="ATPase_F1/V1_b/a_C"/>
</dbReference>
<dbReference type="InterPro" id="IPR027417">
    <property type="entry name" value="P-loop_NTPase"/>
</dbReference>
<dbReference type="NCBIfam" id="TIGR01039">
    <property type="entry name" value="atpD"/>
    <property type="match status" value="1"/>
</dbReference>
<dbReference type="PANTHER" id="PTHR15184">
    <property type="entry name" value="ATP SYNTHASE"/>
    <property type="match status" value="1"/>
</dbReference>
<dbReference type="PANTHER" id="PTHR15184:SF71">
    <property type="entry name" value="ATP SYNTHASE SUBUNIT BETA, MITOCHONDRIAL"/>
    <property type="match status" value="1"/>
</dbReference>
<dbReference type="Pfam" id="PF00006">
    <property type="entry name" value="ATP-synt_ab"/>
    <property type="match status" value="1"/>
</dbReference>
<dbReference type="Pfam" id="PF02874">
    <property type="entry name" value="ATP-synt_ab_N"/>
    <property type="match status" value="1"/>
</dbReference>
<dbReference type="Pfam" id="PF22919">
    <property type="entry name" value="ATP-synt_VA_C"/>
    <property type="match status" value="1"/>
</dbReference>
<dbReference type="SMART" id="SM00382">
    <property type="entry name" value="AAA"/>
    <property type="match status" value="1"/>
</dbReference>
<dbReference type="SUPFAM" id="SSF47917">
    <property type="entry name" value="C-terminal domain of alpha and beta subunits of F1 ATP synthase"/>
    <property type="match status" value="1"/>
</dbReference>
<dbReference type="SUPFAM" id="SSF50615">
    <property type="entry name" value="N-terminal domain of alpha and beta subunits of F1 ATP synthase"/>
    <property type="match status" value="1"/>
</dbReference>
<dbReference type="SUPFAM" id="SSF52540">
    <property type="entry name" value="P-loop containing nucleoside triphosphate hydrolases"/>
    <property type="match status" value="1"/>
</dbReference>
<dbReference type="PROSITE" id="PS00152">
    <property type="entry name" value="ATPASE_ALPHA_BETA"/>
    <property type="match status" value="1"/>
</dbReference>
<accession>Q13SQ2</accession>
<sequence>MSTTALVEGKIVQCIGAVIDVEFPRDHMPKIYDALILEGSELTLEVQQQLGDGVVRTICLGASDGLRRGTTVKNTGKPISVPVGKPTLGRIMDVLGRPIDEAGPINSDVVRGIHQKAPAFDELSPSTELLETGIKVIDLICPFAKGGKVGLFGGAGVGKTVNMMELINNIAKEHGGYSVFAGVGERTREGNDFYHEMKDSNVLDKVALVYGQMNEPPGNRLRVALTGLTMAEHFRDEGLDVLFFVDNIYRFTLAGTEVSALLGRMPSAVGYQPTLAEEMGKLQERITSTKTGSITSVQAVYVPADDLTDPSPATTFGHLDATVVLSRDIASLGIYPAVDPLDSTSRQIDPNVIGEEHYSITRGVQQTLQRYKELRDIIAILGMDELAPEDKLAVARARKIQRFLSQPFHVAEVFTGSPGKYVPLKETIRGFKMIVEGECDHLPEQAFYMVGTIDEAFEKAKKIQ</sequence>